<keyword id="KW-0963">Cytoplasm</keyword>
<keyword id="KW-0378">Hydrolase</keyword>
<keyword id="KW-0546">Nucleotide metabolism</keyword>
<keyword id="KW-1185">Reference proteome</keyword>
<sequence length="195" mass="21596">MILMITQHPLILASASPRRTELLRQIGVPHTIRPADVLEEAPYPMTADEYVMYLSRKKARAVAKPGEIVLAADTVVALDQQILEKPADQPAALEMFRLLSGRTHEVVTGVTLLQDEREETFTVTTTVRFCEIPESWMLSYAATDEPYDKAGGYGIQGKGGLFVEAIDGDYYNVVGLPINPISRRLEAFGIEPMFA</sequence>
<name>NTPPA_EXIS2</name>
<proteinExistence type="inferred from homology"/>
<gene>
    <name type="ordered locus">Exig_2117</name>
</gene>
<protein>
    <recommendedName>
        <fullName evidence="1">dTTP/UTP pyrophosphatase</fullName>
        <shortName evidence="1">dTTPase/UTPase</shortName>
        <ecNumber evidence="1">3.6.1.9</ecNumber>
    </recommendedName>
    <alternativeName>
        <fullName evidence="1">Nucleoside triphosphate pyrophosphatase</fullName>
    </alternativeName>
    <alternativeName>
        <fullName evidence="1">Nucleotide pyrophosphatase</fullName>
        <shortName evidence="1">Nucleotide PPase</shortName>
    </alternativeName>
</protein>
<evidence type="ECO:0000255" key="1">
    <source>
        <dbReference type="HAMAP-Rule" id="MF_00528"/>
    </source>
</evidence>
<comment type="function">
    <text evidence="1">Nucleoside triphosphate pyrophosphatase that hydrolyzes dTTP and UTP. May have a dual role in cell division arrest and in preventing the incorporation of modified nucleotides into cellular nucleic acids.</text>
</comment>
<comment type="catalytic activity">
    <reaction evidence="1">
        <text>dTTP + H2O = dTMP + diphosphate + H(+)</text>
        <dbReference type="Rhea" id="RHEA:28534"/>
        <dbReference type="ChEBI" id="CHEBI:15377"/>
        <dbReference type="ChEBI" id="CHEBI:15378"/>
        <dbReference type="ChEBI" id="CHEBI:33019"/>
        <dbReference type="ChEBI" id="CHEBI:37568"/>
        <dbReference type="ChEBI" id="CHEBI:63528"/>
        <dbReference type="EC" id="3.6.1.9"/>
    </reaction>
</comment>
<comment type="catalytic activity">
    <reaction evidence="1">
        <text>UTP + H2O = UMP + diphosphate + H(+)</text>
        <dbReference type="Rhea" id="RHEA:29395"/>
        <dbReference type="ChEBI" id="CHEBI:15377"/>
        <dbReference type="ChEBI" id="CHEBI:15378"/>
        <dbReference type="ChEBI" id="CHEBI:33019"/>
        <dbReference type="ChEBI" id="CHEBI:46398"/>
        <dbReference type="ChEBI" id="CHEBI:57865"/>
        <dbReference type="EC" id="3.6.1.9"/>
    </reaction>
</comment>
<comment type="cofactor">
    <cofactor evidence="1">
        <name>a divalent metal cation</name>
        <dbReference type="ChEBI" id="CHEBI:60240"/>
    </cofactor>
</comment>
<comment type="subcellular location">
    <subcellularLocation>
        <location evidence="1">Cytoplasm</location>
    </subcellularLocation>
</comment>
<comment type="similarity">
    <text evidence="1">Belongs to the Maf family. YhdE subfamily.</text>
</comment>
<feature type="chain" id="PRO_1000127785" description="dTTP/UTP pyrophosphatase">
    <location>
        <begin position="1"/>
        <end position="195"/>
    </location>
</feature>
<feature type="active site" description="Proton acceptor" evidence="1">
    <location>
        <position position="73"/>
    </location>
</feature>
<feature type="site" description="Important for substrate specificity" evidence="1">
    <location>
        <position position="18"/>
    </location>
</feature>
<feature type="site" description="Important for substrate specificity" evidence="1">
    <location>
        <position position="74"/>
    </location>
</feature>
<feature type="site" description="Important for substrate specificity" evidence="1">
    <location>
        <position position="156"/>
    </location>
</feature>
<reference key="1">
    <citation type="submission" date="2008-04" db="EMBL/GenBank/DDBJ databases">
        <title>Complete sequence of chromosome of Exiguobacterium sibiricum 255-15.</title>
        <authorList>
            <consortium name="US DOE Joint Genome Institute"/>
            <person name="Copeland A."/>
            <person name="Lucas S."/>
            <person name="Lapidus A."/>
            <person name="Glavina del Rio T."/>
            <person name="Dalin E."/>
            <person name="Tice H."/>
            <person name="Bruce D."/>
            <person name="Goodwin L."/>
            <person name="Pitluck S."/>
            <person name="Kiss H."/>
            <person name="Chertkov O."/>
            <person name="Monk C."/>
            <person name="Brettin T."/>
            <person name="Detter J.C."/>
            <person name="Han C."/>
            <person name="Kuske C.R."/>
            <person name="Schmutz J."/>
            <person name="Larimer F."/>
            <person name="Land M."/>
            <person name="Hauser L."/>
            <person name="Kyrpides N."/>
            <person name="Mikhailova N."/>
            <person name="Vishnivetskaya T."/>
            <person name="Rodrigues D.F."/>
            <person name="Gilichinsky D."/>
            <person name="Tiedje J."/>
            <person name="Richardson P."/>
        </authorList>
    </citation>
    <scope>NUCLEOTIDE SEQUENCE [LARGE SCALE GENOMIC DNA]</scope>
    <source>
        <strain>DSM 17290 / CCUG 55495 / CIP 109462 / JCM 13490 / 255-15</strain>
    </source>
</reference>
<accession>B1YJT1</accession>
<organism>
    <name type="scientific">Exiguobacterium sibiricum (strain DSM 17290 / CCUG 55495 / CIP 109462 / JCM 13490 / 255-15)</name>
    <dbReference type="NCBI Taxonomy" id="262543"/>
    <lineage>
        <taxon>Bacteria</taxon>
        <taxon>Bacillati</taxon>
        <taxon>Bacillota</taxon>
        <taxon>Bacilli</taxon>
        <taxon>Bacillales</taxon>
        <taxon>Bacillales Family XII. Incertae Sedis</taxon>
        <taxon>Exiguobacterium</taxon>
    </lineage>
</organism>
<dbReference type="EC" id="3.6.1.9" evidence="1"/>
<dbReference type="EMBL" id="CP001022">
    <property type="protein sequence ID" value="ACB61569.1"/>
    <property type="molecule type" value="Genomic_DNA"/>
</dbReference>
<dbReference type="SMR" id="B1YJT1"/>
<dbReference type="STRING" id="262543.Exig_2117"/>
<dbReference type="KEGG" id="esi:Exig_2117"/>
<dbReference type="eggNOG" id="COG0424">
    <property type="taxonomic scope" value="Bacteria"/>
</dbReference>
<dbReference type="HOGENOM" id="CLU_040416_2_1_9"/>
<dbReference type="OrthoDB" id="9807767at2"/>
<dbReference type="Proteomes" id="UP000001681">
    <property type="component" value="Chromosome"/>
</dbReference>
<dbReference type="GO" id="GO:0005737">
    <property type="term" value="C:cytoplasm"/>
    <property type="evidence" value="ECO:0007669"/>
    <property type="project" value="UniProtKB-SubCell"/>
</dbReference>
<dbReference type="GO" id="GO:0036218">
    <property type="term" value="F:dTTP diphosphatase activity"/>
    <property type="evidence" value="ECO:0007669"/>
    <property type="project" value="RHEA"/>
</dbReference>
<dbReference type="GO" id="GO:0036221">
    <property type="term" value="F:UTP diphosphatase activity"/>
    <property type="evidence" value="ECO:0007669"/>
    <property type="project" value="RHEA"/>
</dbReference>
<dbReference type="GO" id="GO:0009117">
    <property type="term" value="P:nucleotide metabolic process"/>
    <property type="evidence" value="ECO:0007669"/>
    <property type="project" value="UniProtKB-KW"/>
</dbReference>
<dbReference type="CDD" id="cd00555">
    <property type="entry name" value="Maf"/>
    <property type="match status" value="1"/>
</dbReference>
<dbReference type="Gene3D" id="3.90.950.10">
    <property type="match status" value="1"/>
</dbReference>
<dbReference type="HAMAP" id="MF_00528">
    <property type="entry name" value="Maf"/>
    <property type="match status" value="1"/>
</dbReference>
<dbReference type="InterPro" id="IPR029001">
    <property type="entry name" value="ITPase-like_fam"/>
</dbReference>
<dbReference type="InterPro" id="IPR003697">
    <property type="entry name" value="Maf-like"/>
</dbReference>
<dbReference type="NCBIfam" id="TIGR00172">
    <property type="entry name" value="maf"/>
    <property type="match status" value="1"/>
</dbReference>
<dbReference type="PANTHER" id="PTHR43213">
    <property type="entry name" value="BIFUNCTIONAL DTTP/UTP PYROPHOSPHATASE/METHYLTRANSFERASE PROTEIN-RELATED"/>
    <property type="match status" value="1"/>
</dbReference>
<dbReference type="PANTHER" id="PTHR43213:SF5">
    <property type="entry name" value="BIFUNCTIONAL DTTP_UTP PYROPHOSPHATASE_METHYLTRANSFERASE PROTEIN-RELATED"/>
    <property type="match status" value="1"/>
</dbReference>
<dbReference type="Pfam" id="PF02545">
    <property type="entry name" value="Maf"/>
    <property type="match status" value="1"/>
</dbReference>
<dbReference type="PIRSF" id="PIRSF006305">
    <property type="entry name" value="Maf"/>
    <property type="match status" value="1"/>
</dbReference>
<dbReference type="SUPFAM" id="SSF52972">
    <property type="entry name" value="ITPase-like"/>
    <property type="match status" value="1"/>
</dbReference>